<organism>
    <name type="scientific">Streptococcus pyogenes serotype M6 (strain ATCC BAA-946 / MGAS10394)</name>
    <dbReference type="NCBI Taxonomy" id="286636"/>
    <lineage>
        <taxon>Bacteria</taxon>
        <taxon>Bacillati</taxon>
        <taxon>Bacillota</taxon>
        <taxon>Bacilli</taxon>
        <taxon>Lactobacillales</taxon>
        <taxon>Streptococcaceae</taxon>
        <taxon>Streptococcus</taxon>
    </lineage>
</organism>
<feature type="chain" id="PRO_0000138900" description="Protease HtpX homolog">
    <location>
        <begin position="1"/>
        <end position="298"/>
    </location>
</feature>
<feature type="transmembrane region" description="Helical" evidence="1">
    <location>
        <begin position="14"/>
        <end position="34"/>
    </location>
</feature>
<feature type="transmembrane region" description="Helical" evidence="1">
    <location>
        <begin position="39"/>
        <end position="59"/>
    </location>
</feature>
<feature type="transmembrane region" description="Helical" evidence="1">
    <location>
        <begin position="158"/>
        <end position="178"/>
    </location>
</feature>
<feature type="transmembrane region" description="Helical" evidence="1">
    <location>
        <begin position="197"/>
        <end position="217"/>
    </location>
</feature>
<feature type="active site" evidence="1">
    <location>
        <position position="144"/>
    </location>
</feature>
<feature type="binding site" evidence="1">
    <location>
        <position position="143"/>
    </location>
    <ligand>
        <name>Zn(2+)</name>
        <dbReference type="ChEBI" id="CHEBI:29105"/>
        <note>catalytic</note>
    </ligand>
</feature>
<feature type="binding site" evidence="1">
    <location>
        <position position="147"/>
    </location>
    <ligand>
        <name>Zn(2+)</name>
        <dbReference type="ChEBI" id="CHEBI:29105"/>
        <note>catalytic</note>
    </ligand>
</feature>
<feature type="binding site" evidence="1">
    <location>
        <position position="226"/>
    </location>
    <ligand>
        <name>Zn(2+)</name>
        <dbReference type="ChEBI" id="CHEBI:29105"/>
        <note>catalytic</note>
    </ligand>
</feature>
<gene>
    <name evidence="1" type="primary">htpX</name>
    <name type="ordered locus">M6_Spy0308</name>
</gene>
<name>HTPX_STRP6</name>
<protein>
    <recommendedName>
        <fullName evidence="1">Protease HtpX homolog</fullName>
        <ecNumber evidence="1">3.4.24.-</ecNumber>
    </recommendedName>
</protein>
<comment type="cofactor">
    <cofactor evidence="1">
        <name>Zn(2+)</name>
        <dbReference type="ChEBI" id="CHEBI:29105"/>
    </cofactor>
    <text evidence="1">Binds 1 zinc ion per subunit.</text>
</comment>
<comment type="subcellular location">
    <subcellularLocation>
        <location evidence="1">Cell membrane</location>
        <topology evidence="1">Multi-pass membrane protein</topology>
    </subcellularLocation>
</comment>
<comment type="similarity">
    <text evidence="1">Belongs to the peptidase M48B family.</text>
</comment>
<reference key="1">
    <citation type="journal article" date="2004" name="J. Infect. Dis.">
        <title>Progress toward characterization of the group A Streptococcus metagenome: complete genome sequence of a macrolide-resistant serotype M6 strain.</title>
        <authorList>
            <person name="Banks D.J."/>
            <person name="Porcella S.F."/>
            <person name="Barbian K.D."/>
            <person name="Beres S.B."/>
            <person name="Philips L.E."/>
            <person name="Voyich J.M."/>
            <person name="DeLeo F.R."/>
            <person name="Martin J.M."/>
            <person name="Somerville G.A."/>
            <person name="Musser J.M."/>
        </authorList>
    </citation>
    <scope>NUCLEOTIDE SEQUENCE [LARGE SCALE GENOMIC DNA]</scope>
    <source>
        <strain>ATCC BAA-946 / MGAS10394</strain>
    </source>
</reference>
<proteinExistence type="inferred from homology"/>
<sequence>MLYQQISQNKQGTVVLLVVFFALLALIGASAGYLLLDNYAMGLVLALVIGVIYATSMIFQSTSLVMSMNNAREVTEKEAPGFFHIVEDMAMVAQIPMPRVFIIEDPSLNAFATGSSPQNAAVAATTGLLEVMNREELEGVIGHEISHIRNYDIRISTIAVALASAVTVISSIGGRMLWYGGGSRRQRDDGDDDVLRIITLLLSLLSLLLAPLVASLIQLAISRQREYLADASSVELTRNPQGMIKALEKLQLSQPMKHPVDDASAALYINEPRKKRSFSSLFSTHPPIEERIERLKNM</sequence>
<evidence type="ECO:0000255" key="1">
    <source>
        <dbReference type="HAMAP-Rule" id="MF_00188"/>
    </source>
</evidence>
<accession>Q5XDS0</accession>
<keyword id="KW-1003">Cell membrane</keyword>
<keyword id="KW-0378">Hydrolase</keyword>
<keyword id="KW-0472">Membrane</keyword>
<keyword id="KW-0479">Metal-binding</keyword>
<keyword id="KW-0482">Metalloprotease</keyword>
<keyword id="KW-0645">Protease</keyword>
<keyword id="KW-0812">Transmembrane</keyword>
<keyword id="KW-1133">Transmembrane helix</keyword>
<keyword id="KW-0862">Zinc</keyword>
<dbReference type="EC" id="3.4.24.-" evidence="1"/>
<dbReference type="EMBL" id="CP000003">
    <property type="protein sequence ID" value="AAT86443.1"/>
    <property type="molecule type" value="Genomic_DNA"/>
</dbReference>
<dbReference type="RefSeq" id="WP_011184188.1">
    <property type="nucleotide sequence ID" value="NC_006086.1"/>
</dbReference>
<dbReference type="SMR" id="Q5XDS0"/>
<dbReference type="KEGG" id="spa:M6_Spy0308"/>
<dbReference type="HOGENOM" id="CLU_042266_2_1_9"/>
<dbReference type="Proteomes" id="UP000001167">
    <property type="component" value="Chromosome"/>
</dbReference>
<dbReference type="GO" id="GO:0005886">
    <property type="term" value="C:plasma membrane"/>
    <property type="evidence" value="ECO:0007669"/>
    <property type="project" value="UniProtKB-SubCell"/>
</dbReference>
<dbReference type="GO" id="GO:0004222">
    <property type="term" value="F:metalloendopeptidase activity"/>
    <property type="evidence" value="ECO:0007669"/>
    <property type="project" value="UniProtKB-UniRule"/>
</dbReference>
<dbReference type="GO" id="GO:0008270">
    <property type="term" value="F:zinc ion binding"/>
    <property type="evidence" value="ECO:0007669"/>
    <property type="project" value="UniProtKB-UniRule"/>
</dbReference>
<dbReference type="GO" id="GO:0006508">
    <property type="term" value="P:proteolysis"/>
    <property type="evidence" value="ECO:0007669"/>
    <property type="project" value="UniProtKB-KW"/>
</dbReference>
<dbReference type="CDD" id="cd07340">
    <property type="entry name" value="M48B_Htpx_like"/>
    <property type="match status" value="1"/>
</dbReference>
<dbReference type="Gene3D" id="3.30.2010.10">
    <property type="entry name" value="Metalloproteases ('zincins'), catalytic domain"/>
    <property type="match status" value="1"/>
</dbReference>
<dbReference type="HAMAP" id="MF_00188">
    <property type="entry name" value="Pept_M48_protease_HtpX"/>
    <property type="match status" value="1"/>
</dbReference>
<dbReference type="InterPro" id="IPR050083">
    <property type="entry name" value="HtpX_protease"/>
</dbReference>
<dbReference type="InterPro" id="IPR022919">
    <property type="entry name" value="Pept_M48_protease_HtpX"/>
</dbReference>
<dbReference type="InterPro" id="IPR001915">
    <property type="entry name" value="Peptidase_M48"/>
</dbReference>
<dbReference type="NCBIfam" id="NF003425">
    <property type="entry name" value="PRK04897.1"/>
    <property type="match status" value="1"/>
</dbReference>
<dbReference type="PANTHER" id="PTHR43221">
    <property type="entry name" value="PROTEASE HTPX"/>
    <property type="match status" value="1"/>
</dbReference>
<dbReference type="PANTHER" id="PTHR43221:SF1">
    <property type="entry name" value="PROTEASE HTPX"/>
    <property type="match status" value="1"/>
</dbReference>
<dbReference type="Pfam" id="PF01435">
    <property type="entry name" value="Peptidase_M48"/>
    <property type="match status" value="1"/>
</dbReference>